<sequence>MKNKNLSMPSLKEKLLQETVEHIDITRFDARPIIDAMDHMSFTSRDLARATQIFNRMLQDEQCSIILSLAGSTSAGGCMKLYADLVKYNMVDAIVATGASIVDMDFFEALGFRHYQGSPAVEDRQLRDLYIDRIYDTYIDEEDLQRCDHTIYEIANSLEPRPYSSREFIHHMGAYLAQGKAKKEESLVQLAYEHDVPIFCPAFTDSSAGFGLVLHQVKNPDRHLTIDSIRDFRELTDIKIKAGTTGLLMIGGGVPKNFVQDTVVCAEVIGKTVDMHKYAIQITVADVRDGACSSSTLKEACSWGKVDTAYEQMVYAEATSGLPLLASDAYHRGYWKDRSPRQYANLFKSESK</sequence>
<organism>
    <name type="scientific">Coxiella burnetii (strain RSA 493 / Nine Mile phase I)</name>
    <dbReference type="NCBI Taxonomy" id="227377"/>
    <lineage>
        <taxon>Bacteria</taxon>
        <taxon>Pseudomonadati</taxon>
        <taxon>Pseudomonadota</taxon>
        <taxon>Gammaproteobacteria</taxon>
        <taxon>Legionellales</taxon>
        <taxon>Coxiellaceae</taxon>
        <taxon>Coxiella</taxon>
    </lineage>
</organism>
<feature type="chain" id="PRO_0000134515" description="Deoxyhypusine synthase-like protein">
    <location>
        <begin position="1"/>
        <end position="352"/>
    </location>
</feature>
<name>DHSL_COXBU</name>
<gene>
    <name type="ordered locus">CBU_0721</name>
</gene>
<keyword id="KW-1185">Reference proteome</keyword>
<keyword id="KW-0808">Transferase</keyword>
<proteinExistence type="inferred from homology"/>
<dbReference type="EC" id="2.5.-.-"/>
<dbReference type="EMBL" id="AE016828">
    <property type="protein sequence ID" value="AAO90263.2"/>
    <property type="status" value="ALT_INIT"/>
    <property type="molecule type" value="Genomic_DNA"/>
</dbReference>
<dbReference type="RefSeq" id="NP_819749.2">
    <property type="nucleotide sequence ID" value="NC_002971.3"/>
</dbReference>
<dbReference type="SMR" id="P59650"/>
<dbReference type="STRING" id="227377.CBU_0721"/>
<dbReference type="EnsemblBacteria" id="AAO90263">
    <property type="protein sequence ID" value="AAO90263"/>
    <property type="gene ID" value="CBU_0721"/>
</dbReference>
<dbReference type="GeneID" id="1208611"/>
<dbReference type="KEGG" id="cbu:CBU_0721"/>
<dbReference type="PATRIC" id="fig|227377.7.peg.706"/>
<dbReference type="eggNOG" id="COG1899">
    <property type="taxonomic scope" value="Bacteria"/>
</dbReference>
<dbReference type="HOGENOM" id="CLU_039781_1_0_6"/>
<dbReference type="OrthoDB" id="9771211at2"/>
<dbReference type="Proteomes" id="UP000002671">
    <property type="component" value="Chromosome"/>
</dbReference>
<dbReference type="GO" id="GO:0005737">
    <property type="term" value="C:cytoplasm"/>
    <property type="evidence" value="ECO:0000318"/>
    <property type="project" value="GO_Central"/>
</dbReference>
<dbReference type="GO" id="GO:0034038">
    <property type="term" value="F:deoxyhypusine synthase activity"/>
    <property type="evidence" value="ECO:0000318"/>
    <property type="project" value="GO_Central"/>
</dbReference>
<dbReference type="GO" id="GO:0008216">
    <property type="term" value="P:spermidine metabolic process"/>
    <property type="evidence" value="ECO:0000318"/>
    <property type="project" value="GO_Central"/>
</dbReference>
<dbReference type="FunFam" id="3.40.910.10:FF:000006">
    <property type="entry name" value="Probable deoxyhypusine synthase"/>
    <property type="match status" value="1"/>
</dbReference>
<dbReference type="Gene3D" id="3.40.910.10">
    <property type="entry name" value="Deoxyhypusine synthase"/>
    <property type="match status" value="1"/>
</dbReference>
<dbReference type="HAMAP" id="MF_00640">
    <property type="entry name" value="DHS_like"/>
    <property type="match status" value="1"/>
</dbReference>
<dbReference type="InterPro" id="IPR002773">
    <property type="entry name" value="Deoxyhypusine_synthase"/>
</dbReference>
<dbReference type="InterPro" id="IPR023496">
    <property type="entry name" value="Deoxyhypusine_synthase-like"/>
</dbReference>
<dbReference type="InterPro" id="IPR036982">
    <property type="entry name" value="Deoxyhypusine_synthase_sf"/>
</dbReference>
<dbReference type="InterPro" id="IPR029035">
    <property type="entry name" value="DHS-like_NAD/FAD-binding_dom"/>
</dbReference>
<dbReference type="NCBIfam" id="NF002699">
    <property type="entry name" value="PRK02492.1"/>
    <property type="match status" value="1"/>
</dbReference>
<dbReference type="PANTHER" id="PTHR11703">
    <property type="entry name" value="DEOXYHYPUSINE SYNTHASE"/>
    <property type="match status" value="1"/>
</dbReference>
<dbReference type="PANTHER" id="PTHR11703:SF2">
    <property type="entry name" value="DEOXYHYPUSINE SYNTHASE-LIKE PROTEIN"/>
    <property type="match status" value="1"/>
</dbReference>
<dbReference type="Pfam" id="PF01916">
    <property type="entry name" value="DS"/>
    <property type="match status" value="1"/>
</dbReference>
<dbReference type="SUPFAM" id="SSF52467">
    <property type="entry name" value="DHS-like NAD/FAD-binding domain"/>
    <property type="match status" value="1"/>
</dbReference>
<evidence type="ECO:0000305" key="1"/>
<comment type="similarity">
    <text evidence="1">Belongs to the deoxyhypusine synthase family.</text>
</comment>
<comment type="sequence caution" evidence="1">
    <conflict type="erroneous initiation">
        <sequence resource="EMBL-CDS" id="AAO90263"/>
    </conflict>
</comment>
<protein>
    <recommendedName>
        <fullName>Deoxyhypusine synthase-like protein</fullName>
        <ecNumber>2.5.-.-</ecNumber>
    </recommendedName>
</protein>
<accession>P59650</accession>
<reference key="1">
    <citation type="journal article" date="2003" name="Proc. Natl. Acad. Sci. U.S.A.">
        <title>Complete genome sequence of the Q-fever pathogen, Coxiella burnetii.</title>
        <authorList>
            <person name="Seshadri R."/>
            <person name="Paulsen I.T."/>
            <person name="Eisen J.A."/>
            <person name="Read T.D."/>
            <person name="Nelson K.E."/>
            <person name="Nelson W.C."/>
            <person name="Ward N.L."/>
            <person name="Tettelin H."/>
            <person name="Davidsen T.M."/>
            <person name="Beanan M.J."/>
            <person name="DeBoy R.T."/>
            <person name="Daugherty S.C."/>
            <person name="Brinkac L.M."/>
            <person name="Madupu R."/>
            <person name="Dodson R.J."/>
            <person name="Khouri H.M."/>
            <person name="Lee K.H."/>
            <person name="Carty H.A."/>
            <person name="Scanlan D."/>
            <person name="Heinzen R.A."/>
            <person name="Thompson H.A."/>
            <person name="Samuel J.E."/>
            <person name="Fraser C.M."/>
            <person name="Heidelberg J.F."/>
        </authorList>
    </citation>
    <scope>NUCLEOTIDE SEQUENCE [LARGE SCALE GENOMIC DNA]</scope>
    <source>
        <strain>RSA 493 / Nine Mile phase I</strain>
    </source>
</reference>